<evidence type="ECO:0000250" key="1">
    <source>
        <dbReference type="UniProtKB" id="P55769"/>
    </source>
</evidence>
<evidence type="ECO:0000305" key="2"/>
<proteinExistence type="evidence at transcript level"/>
<accession>Q5XH16</accession>
<comment type="function">
    <text evidence="1">Part of the small subunit (SSU) processome, first precursor of the small eukaryotic ribosomal subunit. During the assembly of the SSU processome in the nucleolus, many ribosome biogenesis factors, an RNA chaperone and ribosomal proteins associate with the nascent pre-rRNA and work in concert to generate RNA folding, modifications, rearrangements and cleavage as well as targeted degradation of pre-ribosomal RNA by the RNA exosome. Involved in pre-mRNA splicing as component of the spliceosome. Binds to the 5'-stem-loop of U4 snRNA and thereby contributes to spliceosome assembly. The protein undergoes a conformational change upon RNA-binding. Core component of box C/D small nucleolar ribonucleoprotein (snoRNP) complexes that function in methylation of multiple sites on ribosomal RNAs (rRNAs) and messenger RNAs (mRNAs) (By similarity).</text>
</comment>
<comment type="subunit">
    <text evidence="1">Identified in the spliceosome B complex. Component of the U4/U6-U5 tri-snRNP complex. Part of the small subunit (SSU) processome, composed of more than 70 proteins and the RNA chaperone small nucleolar RNA (snoRNA) U3 (By similarity).</text>
</comment>
<comment type="subcellular location">
    <subcellularLocation>
        <location evidence="1">Nucleus</location>
    </subcellularLocation>
    <subcellularLocation>
        <location evidence="1">Nucleus</location>
        <location evidence="1">Nucleolus</location>
    </subcellularLocation>
</comment>
<comment type="similarity">
    <text evidence="2">Belongs to the eukaryotic ribosomal protein eL8 family.</text>
</comment>
<feature type="chain" id="PRO_0000320040" description="NHP2-like protein 1">
    <location>
        <begin position="1"/>
        <end position="128"/>
    </location>
</feature>
<feature type="region of interest" description="Interaction with U4 snRNA and U4atac snRNA" evidence="1">
    <location>
        <begin position="36"/>
        <end position="48"/>
    </location>
</feature>
<feature type="region of interest" description="Important for U4 snRNA-binding" evidence="1">
    <location>
        <begin position="96"/>
        <end position="128"/>
    </location>
</feature>
<feature type="site" description="Interaction with U4 snRNA and U4atac snRNA" evidence="1">
    <location>
        <position position="61"/>
    </location>
</feature>
<feature type="site" description="Interaction with U4 snRNA and U4atac snRNA" evidence="1">
    <location>
        <position position="86"/>
    </location>
</feature>
<reference key="1">
    <citation type="submission" date="2004-10" db="EMBL/GenBank/DDBJ databases">
        <authorList>
            <consortium name="NIH - Xenopus Gene Collection (XGC) project"/>
        </authorList>
    </citation>
    <scope>NUCLEOTIDE SEQUENCE [LARGE SCALE MRNA]</scope>
    <source>
        <tissue>Kidney</tissue>
    </source>
</reference>
<dbReference type="EMBL" id="BC084259">
    <property type="protein sequence ID" value="AAH84259.1"/>
    <property type="molecule type" value="mRNA"/>
</dbReference>
<dbReference type="RefSeq" id="NP_001088399.1">
    <property type="nucleotide sequence ID" value="NM_001094930.1"/>
</dbReference>
<dbReference type="SMR" id="Q5XH16"/>
<dbReference type="BioGRID" id="105333">
    <property type="interactions" value="1"/>
</dbReference>
<dbReference type="DNASU" id="495253"/>
<dbReference type="GeneID" id="495253"/>
<dbReference type="KEGG" id="xla:495253"/>
<dbReference type="AGR" id="Xenbase:XB-GENE-963828"/>
<dbReference type="CTD" id="495253"/>
<dbReference type="Xenbase" id="XB-GENE-963828">
    <property type="gene designation" value="snu13.S"/>
</dbReference>
<dbReference type="OMA" id="IKNQIYA"/>
<dbReference type="OrthoDB" id="1924699at2759"/>
<dbReference type="CD-CODE" id="78E86D56">
    <property type="entry name" value="Mitochondrial cloud"/>
</dbReference>
<dbReference type="CD-CODE" id="AC502520">
    <property type="entry name" value="Nucleolus"/>
</dbReference>
<dbReference type="Proteomes" id="UP000186698">
    <property type="component" value="Chromosome 4S"/>
</dbReference>
<dbReference type="Bgee" id="495253">
    <property type="expression patterns" value="Expressed in gastrula and 19 other cell types or tissues"/>
</dbReference>
<dbReference type="GO" id="GO:0031428">
    <property type="term" value="C:box C/D methylation guide snoRNP complex"/>
    <property type="evidence" value="ECO:0000318"/>
    <property type="project" value="GO_Central"/>
</dbReference>
<dbReference type="GO" id="GO:0005730">
    <property type="term" value="C:nucleolus"/>
    <property type="evidence" value="ECO:0000318"/>
    <property type="project" value="GO_Central"/>
</dbReference>
<dbReference type="GO" id="GO:0005634">
    <property type="term" value="C:nucleus"/>
    <property type="evidence" value="ECO:0000250"/>
    <property type="project" value="UniProtKB"/>
</dbReference>
<dbReference type="GO" id="GO:0071011">
    <property type="term" value="C:precatalytic spliceosome"/>
    <property type="evidence" value="ECO:0000318"/>
    <property type="project" value="GO_Central"/>
</dbReference>
<dbReference type="GO" id="GO:0032040">
    <property type="term" value="C:small-subunit processome"/>
    <property type="evidence" value="ECO:0000250"/>
    <property type="project" value="UniProtKB"/>
</dbReference>
<dbReference type="GO" id="GO:0071005">
    <property type="term" value="C:U2-type precatalytic spliceosome"/>
    <property type="evidence" value="ECO:0000250"/>
    <property type="project" value="UniProtKB"/>
</dbReference>
<dbReference type="GO" id="GO:0046540">
    <property type="term" value="C:U4/U6 x U5 tri-snRNP complex"/>
    <property type="evidence" value="ECO:0000250"/>
    <property type="project" value="UniProtKB"/>
</dbReference>
<dbReference type="GO" id="GO:0005690">
    <property type="term" value="C:U4atac snRNP"/>
    <property type="evidence" value="ECO:0000250"/>
    <property type="project" value="UniProtKB"/>
</dbReference>
<dbReference type="GO" id="GO:0003723">
    <property type="term" value="F:RNA binding"/>
    <property type="evidence" value="ECO:0000318"/>
    <property type="project" value="GO_Central"/>
</dbReference>
<dbReference type="GO" id="GO:0030622">
    <property type="term" value="F:U4atac snRNA binding"/>
    <property type="evidence" value="ECO:0000250"/>
    <property type="project" value="UniProtKB"/>
</dbReference>
<dbReference type="GO" id="GO:0030490">
    <property type="term" value="P:maturation of SSU-rRNA"/>
    <property type="evidence" value="ECO:0000318"/>
    <property type="project" value="GO_Central"/>
</dbReference>
<dbReference type="GO" id="GO:0000398">
    <property type="term" value="P:mRNA splicing, via spliceosome"/>
    <property type="evidence" value="ECO:0000250"/>
    <property type="project" value="UniProtKB"/>
</dbReference>
<dbReference type="GO" id="GO:0042274">
    <property type="term" value="P:ribosomal small subunit biogenesis"/>
    <property type="evidence" value="ECO:0000250"/>
    <property type="project" value="UniProtKB"/>
</dbReference>
<dbReference type="CDD" id="cd21104">
    <property type="entry name" value="SNU13"/>
    <property type="match status" value="1"/>
</dbReference>
<dbReference type="FunFam" id="3.30.1330.30:FF:000002">
    <property type="entry name" value="NHP2-like protein 1 homolog"/>
    <property type="match status" value="1"/>
</dbReference>
<dbReference type="Gene3D" id="3.30.1330.30">
    <property type="match status" value="1"/>
</dbReference>
<dbReference type="InterPro" id="IPR050257">
    <property type="entry name" value="eL8/uL1-like"/>
</dbReference>
<dbReference type="InterPro" id="IPR002415">
    <property type="entry name" value="H/ACA_rnp_Nhp2-like"/>
</dbReference>
<dbReference type="InterPro" id="IPR029064">
    <property type="entry name" value="Ribosomal_eL30-like_sf"/>
</dbReference>
<dbReference type="InterPro" id="IPR004037">
    <property type="entry name" value="Ribosomal_eL8-like_CS"/>
</dbReference>
<dbReference type="InterPro" id="IPR004038">
    <property type="entry name" value="Ribosomal_eL8/eL30/eS12/Gad45"/>
</dbReference>
<dbReference type="InterPro" id="IPR018492">
    <property type="entry name" value="Ribosomal_eL8/Nhp2"/>
</dbReference>
<dbReference type="PANTHER" id="PTHR23105">
    <property type="entry name" value="RIBOSOMAL PROTEIN L7AE FAMILY MEMBER"/>
    <property type="match status" value="1"/>
</dbReference>
<dbReference type="Pfam" id="PF01248">
    <property type="entry name" value="Ribosomal_L7Ae"/>
    <property type="match status" value="1"/>
</dbReference>
<dbReference type="PRINTS" id="PR00881">
    <property type="entry name" value="L7ARS6FAMILY"/>
</dbReference>
<dbReference type="PRINTS" id="PR00883">
    <property type="entry name" value="NUCLEARHMG"/>
</dbReference>
<dbReference type="SUPFAM" id="SSF55315">
    <property type="entry name" value="L30e-like"/>
    <property type="match status" value="1"/>
</dbReference>
<dbReference type="PROSITE" id="PS01082">
    <property type="entry name" value="RIBOSOMAL_L7AE"/>
    <property type="match status" value="1"/>
</dbReference>
<keyword id="KW-0507">mRNA processing</keyword>
<keyword id="KW-0508">mRNA splicing</keyword>
<keyword id="KW-0539">Nucleus</keyword>
<keyword id="KW-1185">Reference proteome</keyword>
<keyword id="KW-0687">Ribonucleoprotein</keyword>
<keyword id="KW-0694">RNA-binding</keyword>
<keyword id="KW-0747">Spliceosome</keyword>
<name>NH2L1_XENLA</name>
<protein>
    <recommendedName>
        <fullName>NHP2-like protein 1</fullName>
    </recommendedName>
    <alternativeName>
        <fullName>High mobility group-like nuclear protein 2 homolog 1</fullName>
    </alternativeName>
    <alternativeName>
        <fullName evidence="1">U4/U6.U5 small nuclear ribonucleoprotein SNU13</fullName>
    </alternativeName>
    <alternativeName>
        <fullName>U4/U6.U5 tri-snRNP 15.5 kDa protein</fullName>
    </alternativeName>
</protein>
<organism>
    <name type="scientific">Xenopus laevis</name>
    <name type="common">African clawed frog</name>
    <dbReference type="NCBI Taxonomy" id="8355"/>
    <lineage>
        <taxon>Eukaryota</taxon>
        <taxon>Metazoa</taxon>
        <taxon>Chordata</taxon>
        <taxon>Craniata</taxon>
        <taxon>Vertebrata</taxon>
        <taxon>Euteleostomi</taxon>
        <taxon>Amphibia</taxon>
        <taxon>Batrachia</taxon>
        <taxon>Anura</taxon>
        <taxon>Pipoidea</taxon>
        <taxon>Pipidae</taxon>
        <taxon>Xenopodinae</taxon>
        <taxon>Xenopus</taxon>
        <taxon>Xenopus</taxon>
    </lineage>
</organism>
<sequence length="128" mass="14068">MTEPEVNPKAYPLADAQLTKTLLDLVQQSANYKQLRKGANEATKTLNRGIAEFIVMAADAEPLEIILHLPLLCEDKNVPYVFVRSKQALGRACGVSRPVIACSVTIKEGSQLKPQIQSVQQAIERLLV</sequence>
<gene>
    <name evidence="1" type="primary">snu13</name>
    <name type="synonym">nhp2l1</name>
</gene>